<name>RL10E_PYRNV</name>
<sequence>MPVRPARCYKRIKGPPYTREEYIHGAPMIQIPKFDMGTTSAAARAAFPLVAKLVVQERGQIRMQALEAARQMAYKYLSKYVGDANYYLRLEAVPHHVLRENRMLAMAGADRLQEGMRLAFGSPAGRAARVEAGQVIFYAEFKPEHVAHMKEALRRASTKLPLPTRIVIEAKGDGGGKAATQG</sequence>
<feature type="chain" id="PRO_1000193769" description="Large ribosomal subunit protein uL16">
    <location>
        <begin position="1"/>
        <end position="182"/>
    </location>
</feature>
<accession>B1YDH6</accession>
<gene>
    <name evidence="1" type="primary">rpl10e</name>
    <name type="ordered locus">Tneu_0902</name>
</gene>
<comment type="similarity">
    <text evidence="1">Belongs to the universal ribosomal protein uL16 family.</text>
</comment>
<protein>
    <recommendedName>
        <fullName evidence="1">Large ribosomal subunit protein uL16</fullName>
    </recommendedName>
    <alternativeName>
        <fullName evidence="2">50S ribosomal protein L10e</fullName>
    </alternativeName>
</protein>
<proteinExistence type="inferred from homology"/>
<reference key="1">
    <citation type="submission" date="2008-03" db="EMBL/GenBank/DDBJ databases">
        <title>Complete sequence of Thermoproteus neutrophilus V24Sta.</title>
        <authorList>
            <consortium name="US DOE Joint Genome Institute"/>
            <person name="Copeland A."/>
            <person name="Lucas S."/>
            <person name="Lapidus A."/>
            <person name="Glavina del Rio T."/>
            <person name="Dalin E."/>
            <person name="Tice H."/>
            <person name="Bruce D."/>
            <person name="Goodwin L."/>
            <person name="Pitluck S."/>
            <person name="Sims D."/>
            <person name="Brettin T."/>
            <person name="Detter J.C."/>
            <person name="Han C."/>
            <person name="Kuske C.R."/>
            <person name="Schmutz J."/>
            <person name="Larimer F."/>
            <person name="Land M."/>
            <person name="Hauser L."/>
            <person name="Kyrpides N."/>
            <person name="Mikhailova N."/>
            <person name="Biddle J.F."/>
            <person name="Zhang Z."/>
            <person name="Fitz-Gibbon S.T."/>
            <person name="Lowe T.M."/>
            <person name="Saltikov C."/>
            <person name="House C.H."/>
            <person name="Richardson P."/>
        </authorList>
    </citation>
    <scope>NUCLEOTIDE SEQUENCE [LARGE SCALE GENOMIC DNA]</scope>
    <source>
        <strain>DSM 2338 / JCM 9278 / NBRC 100436 / V24Sta</strain>
    </source>
</reference>
<organism>
    <name type="scientific">Pyrobaculum neutrophilum (strain DSM 2338 / JCM 9278 / NBRC 100436 / V24Sta)</name>
    <name type="common">Thermoproteus neutrophilus</name>
    <dbReference type="NCBI Taxonomy" id="444157"/>
    <lineage>
        <taxon>Archaea</taxon>
        <taxon>Thermoproteota</taxon>
        <taxon>Thermoprotei</taxon>
        <taxon>Thermoproteales</taxon>
        <taxon>Thermoproteaceae</taxon>
        <taxon>Pyrobaculum</taxon>
    </lineage>
</organism>
<evidence type="ECO:0000255" key="1">
    <source>
        <dbReference type="HAMAP-Rule" id="MF_00448"/>
    </source>
</evidence>
<evidence type="ECO:0000305" key="2"/>
<dbReference type="EMBL" id="CP001014">
    <property type="protein sequence ID" value="ACB39839.1"/>
    <property type="molecule type" value="Genomic_DNA"/>
</dbReference>
<dbReference type="RefSeq" id="WP_012350259.1">
    <property type="nucleotide sequence ID" value="NC_010525.1"/>
</dbReference>
<dbReference type="SMR" id="B1YDH6"/>
<dbReference type="STRING" id="444157.Tneu_0902"/>
<dbReference type="GeneID" id="6164568"/>
<dbReference type="KEGG" id="tne:Tneu_0902"/>
<dbReference type="eggNOG" id="arCOG04113">
    <property type="taxonomic scope" value="Archaea"/>
</dbReference>
<dbReference type="HOGENOM" id="CLU_084051_0_2_2"/>
<dbReference type="OrthoDB" id="30538at2157"/>
<dbReference type="Proteomes" id="UP000001694">
    <property type="component" value="Chromosome"/>
</dbReference>
<dbReference type="GO" id="GO:1990904">
    <property type="term" value="C:ribonucleoprotein complex"/>
    <property type="evidence" value="ECO:0007669"/>
    <property type="project" value="UniProtKB-KW"/>
</dbReference>
<dbReference type="GO" id="GO:0005840">
    <property type="term" value="C:ribosome"/>
    <property type="evidence" value="ECO:0007669"/>
    <property type="project" value="UniProtKB-KW"/>
</dbReference>
<dbReference type="GO" id="GO:0003735">
    <property type="term" value="F:structural constituent of ribosome"/>
    <property type="evidence" value="ECO:0007669"/>
    <property type="project" value="InterPro"/>
</dbReference>
<dbReference type="GO" id="GO:0006412">
    <property type="term" value="P:translation"/>
    <property type="evidence" value="ECO:0007669"/>
    <property type="project" value="UniProtKB-UniRule"/>
</dbReference>
<dbReference type="CDD" id="cd01433">
    <property type="entry name" value="Ribosomal_L16_L10e"/>
    <property type="match status" value="1"/>
</dbReference>
<dbReference type="FunFam" id="3.90.1170.10:FF:000008">
    <property type="entry name" value="50S ribosomal protein L10e"/>
    <property type="match status" value="1"/>
</dbReference>
<dbReference type="Gene3D" id="3.90.1170.10">
    <property type="entry name" value="Ribosomal protein L10e/L16"/>
    <property type="match status" value="1"/>
</dbReference>
<dbReference type="HAMAP" id="MF_00448">
    <property type="entry name" value="Ribosomal_uL16_arch"/>
    <property type="match status" value="1"/>
</dbReference>
<dbReference type="InterPro" id="IPR047873">
    <property type="entry name" value="Ribosomal_uL16"/>
</dbReference>
<dbReference type="InterPro" id="IPR022981">
    <property type="entry name" value="Ribosomal_uL16_arc"/>
</dbReference>
<dbReference type="InterPro" id="IPR018255">
    <property type="entry name" value="Ribosomal_uL16_CS_euk_arc"/>
</dbReference>
<dbReference type="InterPro" id="IPR016180">
    <property type="entry name" value="Ribosomal_uL16_dom"/>
</dbReference>
<dbReference type="InterPro" id="IPR001197">
    <property type="entry name" value="Ribosomal_uL16_euk_arch"/>
</dbReference>
<dbReference type="InterPro" id="IPR036920">
    <property type="entry name" value="Ribosomal_uL16_sf"/>
</dbReference>
<dbReference type="NCBIfam" id="NF003236">
    <property type="entry name" value="PRK04199.1-1"/>
    <property type="match status" value="1"/>
</dbReference>
<dbReference type="NCBIfam" id="NF003239">
    <property type="entry name" value="PRK04199.1-4"/>
    <property type="match status" value="1"/>
</dbReference>
<dbReference type="PANTHER" id="PTHR11726">
    <property type="entry name" value="60S RIBOSOMAL PROTEIN L10"/>
    <property type="match status" value="1"/>
</dbReference>
<dbReference type="Pfam" id="PF00252">
    <property type="entry name" value="Ribosomal_L16"/>
    <property type="match status" value="1"/>
</dbReference>
<dbReference type="PIRSF" id="PIRSF005590">
    <property type="entry name" value="Ribosomal_L10"/>
    <property type="match status" value="1"/>
</dbReference>
<dbReference type="SUPFAM" id="SSF54686">
    <property type="entry name" value="Ribosomal protein L16p/L10e"/>
    <property type="match status" value="1"/>
</dbReference>
<dbReference type="PROSITE" id="PS01257">
    <property type="entry name" value="RIBOSOMAL_L10E"/>
    <property type="match status" value="1"/>
</dbReference>
<keyword id="KW-0687">Ribonucleoprotein</keyword>
<keyword id="KW-0689">Ribosomal protein</keyword>